<dbReference type="EMBL" id="CP001087">
    <property type="protein sequence ID" value="ACN14789.1"/>
    <property type="molecule type" value="Genomic_DNA"/>
</dbReference>
<dbReference type="RefSeq" id="WP_015903576.1">
    <property type="nucleotide sequence ID" value="NC_012108.1"/>
</dbReference>
<dbReference type="SMR" id="C0QAZ0"/>
<dbReference type="STRING" id="177437.HRM2_16820"/>
<dbReference type="KEGG" id="dat:HRM2_16820"/>
<dbReference type="eggNOG" id="COG1825">
    <property type="taxonomic scope" value="Bacteria"/>
</dbReference>
<dbReference type="HOGENOM" id="CLU_075939_2_1_7"/>
<dbReference type="OrthoDB" id="9786489at2"/>
<dbReference type="Proteomes" id="UP000000442">
    <property type="component" value="Chromosome"/>
</dbReference>
<dbReference type="GO" id="GO:0022625">
    <property type="term" value="C:cytosolic large ribosomal subunit"/>
    <property type="evidence" value="ECO:0007669"/>
    <property type="project" value="TreeGrafter"/>
</dbReference>
<dbReference type="GO" id="GO:0008097">
    <property type="term" value="F:5S rRNA binding"/>
    <property type="evidence" value="ECO:0007669"/>
    <property type="project" value="InterPro"/>
</dbReference>
<dbReference type="GO" id="GO:0003735">
    <property type="term" value="F:structural constituent of ribosome"/>
    <property type="evidence" value="ECO:0007669"/>
    <property type="project" value="InterPro"/>
</dbReference>
<dbReference type="GO" id="GO:0006412">
    <property type="term" value="P:translation"/>
    <property type="evidence" value="ECO:0007669"/>
    <property type="project" value="UniProtKB-UniRule"/>
</dbReference>
<dbReference type="CDD" id="cd00495">
    <property type="entry name" value="Ribosomal_L25_TL5_CTC"/>
    <property type="match status" value="1"/>
</dbReference>
<dbReference type="Gene3D" id="2.170.120.20">
    <property type="entry name" value="Ribosomal protein L25, beta domain"/>
    <property type="match status" value="1"/>
</dbReference>
<dbReference type="Gene3D" id="2.40.240.10">
    <property type="entry name" value="Ribosomal Protein L25, Chain P"/>
    <property type="match status" value="1"/>
</dbReference>
<dbReference type="HAMAP" id="MF_01334">
    <property type="entry name" value="Ribosomal_bL25_CTC"/>
    <property type="match status" value="1"/>
</dbReference>
<dbReference type="InterPro" id="IPR020056">
    <property type="entry name" value="Rbsml_bL25/Gln-tRNA_synth_N"/>
</dbReference>
<dbReference type="InterPro" id="IPR011035">
    <property type="entry name" value="Ribosomal_bL25/Gln-tRNA_synth"/>
</dbReference>
<dbReference type="InterPro" id="IPR020057">
    <property type="entry name" value="Ribosomal_bL25_b-dom"/>
</dbReference>
<dbReference type="InterPro" id="IPR037121">
    <property type="entry name" value="Ribosomal_bL25_C"/>
</dbReference>
<dbReference type="InterPro" id="IPR001021">
    <property type="entry name" value="Ribosomal_bL25_long"/>
</dbReference>
<dbReference type="InterPro" id="IPR029751">
    <property type="entry name" value="Ribosomal_L25_dom"/>
</dbReference>
<dbReference type="InterPro" id="IPR020930">
    <property type="entry name" value="Ribosomal_uL5_bac-type"/>
</dbReference>
<dbReference type="NCBIfam" id="TIGR00731">
    <property type="entry name" value="bL25_bact_ctc"/>
    <property type="match status" value="1"/>
</dbReference>
<dbReference type="PANTHER" id="PTHR33284">
    <property type="entry name" value="RIBOSOMAL PROTEIN L25/GLN-TRNA SYNTHETASE, ANTI-CODON-BINDING DOMAIN-CONTAINING PROTEIN"/>
    <property type="match status" value="1"/>
</dbReference>
<dbReference type="PANTHER" id="PTHR33284:SF1">
    <property type="entry name" value="RIBOSOMAL PROTEIN L25_GLN-TRNA SYNTHETASE, ANTI-CODON-BINDING DOMAIN-CONTAINING PROTEIN"/>
    <property type="match status" value="1"/>
</dbReference>
<dbReference type="Pfam" id="PF01386">
    <property type="entry name" value="Ribosomal_L25p"/>
    <property type="match status" value="1"/>
</dbReference>
<dbReference type="Pfam" id="PF14693">
    <property type="entry name" value="Ribosomal_TL5_C"/>
    <property type="match status" value="1"/>
</dbReference>
<dbReference type="SUPFAM" id="SSF50715">
    <property type="entry name" value="Ribosomal protein L25-like"/>
    <property type="match status" value="1"/>
</dbReference>
<keyword id="KW-1185">Reference proteome</keyword>
<keyword id="KW-0687">Ribonucleoprotein</keyword>
<keyword id="KW-0689">Ribosomal protein</keyword>
<keyword id="KW-0694">RNA-binding</keyword>
<keyword id="KW-0699">rRNA-binding</keyword>
<accession>C0QAZ0</accession>
<gene>
    <name evidence="1" type="primary">rplY</name>
    <name evidence="1" type="synonym">ctc</name>
    <name type="ordered locus">HRM2_16820</name>
</gene>
<feature type="chain" id="PRO_1000214648" description="Large ribosomal subunit protein bL25">
    <location>
        <begin position="1"/>
        <end position="216"/>
    </location>
</feature>
<feature type="region of interest" description="Disordered" evidence="2">
    <location>
        <begin position="184"/>
        <end position="216"/>
    </location>
</feature>
<feature type="compositionally biased region" description="Acidic residues" evidence="2">
    <location>
        <begin position="189"/>
        <end position="216"/>
    </location>
</feature>
<name>RL25_DESAH</name>
<comment type="function">
    <text evidence="1">This is one of the proteins that binds to the 5S RNA in the ribosome where it forms part of the central protuberance.</text>
</comment>
<comment type="subunit">
    <text evidence="1">Part of the 50S ribosomal subunit; part of the 5S rRNA/L5/L18/L25 subcomplex. Contacts the 5S rRNA. Binds to the 5S rRNA independently of L5 and L18.</text>
</comment>
<comment type="similarity">
    <text evidence="1">Belongs to the bacterial ribosomal protein bL25 family. CTC subfamily.</text>
</comment>
<reference key="1">
    <citation type="journal article" date="2009" name="Environ. Microbiol.">
        <title>Genome sequence of Desulfobacterium autotrophicum HRM2, a marine sulfate reducer oxidizing organic carbon completely to carbon dioxide.</title>
        <authorList>
            <person name="Strittmatter A.W."/>
            <person name="Liesegang H."/>
            <person name="Rabus R."/>
            <person name="Decker I."/>
            <person name="Amann J."/>
            <person name="Andres S."/>
            <person name="Henne A."/>
            <person name="Fricke W.F."/>
            <person name="Martinez-Arias R."/>
            <person name="Bartels D."/>
            <person name="Goesmann A."/>
            <person name="Krause L."/>
            <person name="Puehler A."/>
            <person name="Klenk H.P."/>
            <person name="Richter M."/>
            <person name="Schuler M."/>
            <person name="Gloeckner F.O."/>
            <person name="Meyerdierks A."/>
            <person name="Gottschalk G."/>
            <person name="Amann R."/>
        </authorList>
    </citation>
    <scope>NUCLEOTIDE SEQUENCE [LARGE SCALE GENOMIC DNA]</scope>
    <source>
        <strain>ATCC 43914 / DSM 3382 / VKM B-1955 / HRM2</strain>
    </source>
</reference>
<evidence type="ECO:0000255" key="1">
    <source>
        <dbReference type="HAMAP-Rule" id="MF_01334"/>
    </source>
</evidence>
<evidence type="ECO:0000256" key="2">
    <source>
        <dbReference type="SAM" id="MobiDB-lite"/>
    </source>
</evidence>
<evidence type="ECO:0000305" key="3"/>
<organism>
    <name type="scientific">Desulforapulum autotrophicum (strain ATCC 43914 / DSM 3382 / VKM B-1955 / HRM2)</name>
    <name type="common">Desulfobacterium autotrophicum</name>
    <dbReference type="NCBI Taxonomy" id="177437"/>
    <lineage>
        <taxon>Bacteria</taxon>
        <taxon>Pseudomonadati</taxon>
        <taxon>Thermodesulfobacteriota</taxon>
        <taxon>Desulfobacteria</taxon>
        <taxon>Desulfobacterales</taxon>
        <taxon>Desulfobacteraceae</taxon>
        <taxon>Desulforapulum</taxon>
    </lineage>
</organism>
<sequence length="216" mass="23582">MELIDLKAEPRKGRGKSAARHLRNNDAVPAVLYGAKMDSMPISVSTLDLTTMVRVHGSSGLFINLAINGDTVPSRTVMLKEIQMDTFDLKYLHVDFQAINVSEKITISVPVEAVGESVGVKAGGMIQLIRRELDIICKPGDMPEVIQIDTTDLEVGDSVHVEEIDLGADVEIPHDVNFTVLTVVPPTSDVEEEEGDEDLEEDVEETAAEEEEGVEE</sequence>
<proteinExistence type="inferred from homology"/>
<protein>
    <recommendedName>
        <fullName evidence="1">Large ribosomal subunit protein bL25</fullName>
    </recommendedName>
    <alternativeName>
        <fullName evidence="3">50S ribosomal protein L25</fullName>
    </alternativeName>
    <alternativeName>
        <fullName evidence="1">General stress protein CTC</fullName>
    </alternativeName>
</protein>